<reference key="1">
    <citation type="journal article" date="2003" name="Science">
        <title>A genomic view of the human-Bacteroides thetaiotaomicron symbiosis.</title>
        <authorList>
            <person name="Xu J."/>
            <person name="Bjursell M.K."/>
            <person name="Himrod J."/>
            <person name="Deng S."/>
            <person name="Carmichael L.K."/>
            <person name="Chiang H.C."/>
            <person name="Hooper L.V."/>
            <person name="Gordon J.I."/>
        </authorList>
    </citation>
    <scope>NUCLEOTIDE SEQUENCE [LARGE SCALE GENOMIC DNA]</scope>
    <source>
        <strain>ATCC 29148 / DSM 2079 / JCM 5827 / CCUG 10774 / NCTC 10582 / VPI-5482 / E50</strain>
    </source>
</reference>
<evidence type="ECO:0000255" key="1">
    <source>
        <dbReference type="HAMAP-Rule" id="MF_01343"/>
    </source>
</evidence>
<evidence type="ECO:0000305" key="2"/>
<keyword id="KW-1185">Reference proteome</keyword>
<keyword id="KW-0687">Ribonucleoprotein</keyword>
<keyword id="KW-0689">Ribosomal protein</keyword>
<keyword id="KW-0694">RNA-binding</keyword>
<keyword id="KW-0699">rRNA-binding</keyword>
<gene>
    <name evidence="1" type="primary">rpsO</name>
    <name type="ordered locus">BT_2786</name>
</gene>
<dbReference type="EMBL" id="AE015928">
    <property type="protein sequence ID" value="AAO77892.1"/>
    <property type="molecule type" value="Genomic_DNA"/>
</dbReference>
<dbReference type="RefSeq" id="NP_811698.1">
    <property type="nucleotide sequence ID" value="NC_004663.1"/>
</dbReference>
<dbReference type="RefSeq" id="WP_008761978.1">
    <property type="nucleotide sequence ID" value="NZ_UYXG01000001.1"/>
</dbReference>
<dbReference type="SMR" id="Q8A418"/>
<dbReference type="FunCoup" id="Q8A418">
    <property type="interactions" value="488"/>
</dbReference>
<dbReference type="STRING" id="226186.BT_2786"/>
<dbReference type="PaxDb" id="226186-BT_2786"/>
<dbReference type="EnsemblBacteria" id="AAO77892">
    <property type="protein sequence ID" value="AAO77892"/>
    <property type="gene ID" value="BT_2786"/>
</dbReference>
<dbReference type="GeneID" id="60923965"/>
<dbReference type="KEGG" id="bth:BT_2786"/>
<dbReference type="PATRIC" id="fig|226186.12.peg.2833"/>
<dbReference type="eggNOG" id="COG0184">
    <property type="taxonomic scope" value="Bacteria"/>
</dbReference>
<dbReference type="HOGENOM" id="CLU_148518_0_1_10"/>
<dbReference type="InParanoid" id="Q8A418"/>
<dbReference type="OrthoDB" id="9799262at2"/>
<dbReference type="Proteomes" id="UP000001414">
    <property type="component" value="Chromosome"/>
</dbReference>
<dbReference type="GO" id="GO:0022627">
    <property type="term" value="C:cytosolic small ribosomal subunit"/>
    <property type="evidence" value="ECO:0000318"/>
    <property type="project" value="GO_Central"/>
</dbReference>
<dbReference type="GO" id="GO:0019843">
    <property type="term" value="F:rRNA binding"/>
    <property type="evidence" value="ECO:0007669"/>
    <property type="project" value="UniProtKB-UniRule"/>
</dbReference>
<dbReference type="GO" id="GO:0003735">
    <property type="term" value="F:structural constituent of ribosome"/>
    <property type="evidence" value="ECO:0007669"/>
    <property type="project" value="InterPro"/>
</dbReference>
<dbReference type="GO" id="GO:0006412">
    <property type="term" value="P:translation"/>
    <property type="evidence" value="ECO:0007669"/>
    <property type="project" value="UniProtKB-UniRule"/>
</dbReference>
<dbReference type="CDD" id="cd00353">
    <property type="entry name" value="Ribosomal_S15p_S13e"/>
    <property type="match status" value="1"/>
</dbReference>
<dbReference type="FunFam" id="1.10.287.10:FF:000002">
    <property type="entry name" value="30S ribosomal protein S15"/>
    <property type="match status" value="1"/>
</dbReference>
<dbReference type="Gene3D" id="6.10.250.3130">
    <property type="match status" value="1"/>
</dbReference>
<dbReference type="Gene3D" id="1.10.287.10">
    <property type="entry name" value="S15/NS1, RNA-binding"/>
    <property type="match status" value="1"/>
</dbReference>
<dbReference type="HAMAP" id="MF_01343_B">
    <property type="entry name" value="Ribosomal_uS15_B"/>
    <property type="match status" value="1"/>
</dbReference>
<dbReference type="InterPro" id="IPR000589">
    <property type="entry name" value="Ribosomal_uS15"/>
</dbReference>
<dbReference type="InterPro" id="IPR005290">
    <property type="entry name" value="Ribosomal_uS15_bac-type"/>
</dbReference>
<dbReference type="InterPro" id="IPR009068">
    <property type="entry name" value="uS15_NS1_RNA-bd_sf"/>
</dbReference>
<dbReference type="NCBIfam" id="TIGR00952">
    <property type="entry name" value="S15_bact"/>
    <property type="match status" value="1"/>
</dbReference>
<dbReference type="PANTHER" id="PTHR23321">
    <property type="entry name" value="RIBOSOMAL PROTEIN S15, BACTERIAL AND ORGANELLAR"/>
    <property type="match status" value="1"/>
</dbReference>
<dbReference type="PANTHER" id="PTHR23321:SF26">
    <property type="entry name" value="SMALL RIBOSOMAL SUBUNIT PROTEIN US15M"/>
    <property type="match status" value="1"/>
</dbReference>
<dbReference type="Pfam" id="PF00312">
    <property type="entry name" value="Ribosomal_S15"/>
    <property type="match status" value="1"/>
</dbReference>
<dbReference type="SMART" id="SM01387">
    <property type="entry name" value="Ribosomal_S15"/>
    <property type="match status" value="1"/>
</dbReference>
<dbReference type="SUPFAM" id="SSF47060">
    <property type="entry name" value="S15/NS1 RNA-binding domain"/>
    <property type="match status" value="1"/>
</dbReference>
<dbReference type="PROSITE" id="PS00362">
    <property type="entry name" value="RIBOSOMAL_S15"/>
    <property type="match status" value="1"/>
</dbReference>
<organism>
    <name type="scientific">Bacteroides thetaiotaomicron (strain ATCC 29148 / DSM 2079 / JCM 5827 / CCUG 10774 / NCTC 10582 / VPI-5482 / E50)</name>
    <dbReference type="NCBI Taxonomy" id="226186"/>
    <lineage>
        <taxon>Bacteria</taxon>
        <taxon>Pseudomonadati</taxon>
        <taxon>Bacteroidota</taxon>
        <taxon>Bacteroidia</taxon>
        <taxon>Bacteroidales</taxon>
        <taxon>Bacteroidaceae</taxon>
        <taxon>Bacteroides</taxon>
    </lineage>
</organism>
<protein>
    <recommendedName>
        <fullName evidence="1">Small ribosomal subunit protein uS15</fullName>
    </recommendedName>
    <alternativeName>
        <fullName evidence="2">30S ribosomal protein S15</fullName>
    </alternativeName>
</protein>
<sequence length="89" mass="10475">MYLDAAEKQEIFGKYGKSNSDTGSTEAQIALFSYRISHLTEHMKLNRKDYSTERALTMLVAKRRRLLNYLKDKDITRYRSIVKELGLRK</sequence>
<proteinExistence type="inferred from homology"/>
<comment type="function">
    <text evidence="1">One of the primary rRNA binding proteins, it binds directly to 16S rRNA where it helps nucleate assembly of the platform of the 30S subunit by binding and bridging several RNA helices of the 16S rRNA.</text>
</comment>
<comment type="function">
    <text evidence="1">Forms an intersubunit bridge (bridge B4) with the 23S rRNA of the 50S subunit in the ribosome.</text>
</comment>
<comment type="subunit">
    <text evidence="1">Part of the 30S ribosomal subunit. Forms a bridge to the 50S subunit in the 70S ribosome, contacting the 23S rRNA.</text>
</comment>
<comment type="similarity">
    <text evidence="1">Belongs to the universal ribosomal protein uS15 family.</text>
</comment>
<accession>Q8A418</accession>
<name>RS15_BACTN</name>
<feature type="chain" id="PRO_0000115385" description="Small ribosomal subunit protein uS15">
    <location>
        <begin position="1"/>
        <end position="89"/>
    </location>
</feature>